<dbReference type="EC" id="2.8.4.3" evidence="1"/>
<dbReference type="EMBL" id="CP000282">
    <property type="protein sequence ID" value="ABD82555.1"/>
    <property type="molecule type" value="Genomic_DNA"/>
</dbReference>
<dbReference type="RefSeq" id="WP_011469771.1">
    <property type="nucleotide sequence ID" value="NC_007912.1"/>
</dbReference>
<dbReference type="SMR" id="Q21FH4"/>
<dbReference type="STRING" id="203122.Sde_3300"/>
<dbReference type="GeneID" id="98614921"/>
<dbReference type="KEGG" id="sde:Sde_3300"/>
<dbReference type="eggNOG" id="COG0621">
    <property type="taxonomic scope" value="Bacteria"/>
</dbReference>
<dbReference type="HOGENOM" id="CLU_018697_2_0_6"/>
<dbReference type="OrthoDB" id="9805215at2"/>
<dbReference type="Proteomes" id="UP000001947">
    <property type="component" value="Chromosome"/>
</dbReference>
<dbReference type="GO" id="GO:0005829">
    <property type="term" value="C:cytosol"/>
    <property type="evidence" value="ECO:0007669"/>
    <property type="project" value="TreeGrafter"/>
</dbReference>
<dbReference type="GO" id="GO:0051539">
    <property type="term" value="F:4 iron, 4 sulfur cluster binding"/>
    <property type="evidence" value="ECO:0007669"/>
    <property type="project" value="UniProtKB-UniRule"/>
</dbReference>
<dbReference type="GO" id="GO:0046872">
    <property type="term" value="F:metal ion binding"/>
    <property type="evidence" value="ECO:0007669"/>
    <property type="project" value="UniProtKB-KW"/>
</dbReference>
<dbReference type="GO" id="GO:0035597">
    <property type="term" value="F:N6-isopentenyladenosine methylthiotransferase activity"/>
    <property type="evidence" value="ECO:0007669"/>
    <property type="project" value="TreeGrafter"/>
</dbReference>
<dbReference type="CDD" id="cd01335">
    <property type="entry name" value="Radical_SAM"/>
    <property type="match status" value="1"/>
</dbReference>
<dbReference type="FunFam" id="3.40.50.12160:FF:000001">
    <property type="entry name" value="tRNA-2-methylthio-N(6)-dimethylallyladenosine synthase"/>
    <property type="match status" value="1"/>
</dbReference>
<dbReference type="FunFam" id="3.80.30.20:FF:000001">
    <property type="entry name" value="tRNA-2-methylthio-N(6)-dimethylallyladenosine synthase 2"/>
    <property type="match status" value="1"/>
</dbReference>
<dbReference type="Gene3D" id="3.40.50.12160">
    <property type="entry name" value="Methylthiotransferase, N-terminal domain"/>
    <property type="match status" value="1"/>
</dbReference>
<dbReference type="Gene3D" id="3.80.30.20">
    <property type="entry name" value="tm_1862 like domain"/>
    <property type="match status" value="1"/>
</dbReference>
<dbReference type="HAMAP" id="MF_01864">
    <property type="entry name" value="tRNA_metthiotr_MiaB"/>
    <property type="match status" value="1"/>
</dbReference>
<dbReference type="InterPro" id="IPR006638">
    <property type="entry name" value="Elp3/MiaA/NifB-like_rSAM"/>
</dbReference>
<dbReference type="InterPro" id="IPR005839">
    <property type="entry name" value="Methylthiotransferase"/>
</dbReference>
<dbReference type="InterPro" id="IPR020612">
    <property type="entry name" value="Methylthiotransferase_CS"/>
</dbReference>
<dbReference type="InterPro" id="IPR013848">
    <property type="entry name" value="Methylthiotransferase_N"/>
</dbReference>
<dbReference type="InterPro" id="IPR038135">
    <property type="entry name" value="Methylthiotransferase_N_sf"/>
</dbReference>
<dbReference type="InterPro" id="IPR006463">
    <property type="entry name" value="MiaB_methiolase"/>
</dbReference>
<dbReference type="InterPro" id="IPR007197">
    <property type="entry name" value="rSAM"/>
</dbReference>
<dbReference type="InterPro" id="IPR023404">
    <property type="entry name" value="rSAM_horseshoe"/>
</dbReference>
<dbReference type="InterPro" id="IPR002792">
    <property type="entry name" value="TRAM_dom"/>
</dbReference>
<dbReference type="NCBIfam" id="TIGR01574">
    <property type="entry name" value="miaB-methiolase"/>
    <property type="match status" value="1"/>
</dbReference>
<dbReference type="NCBIfam" id="TIGR00089">
    <property type="entry name" value="MiaB/RimO family radical SAM methylthiotransferase"/>
    <property type="match status" value="1"/>
</dbReference>
<dbReference type="PANTHER" id="PTHR43020">
    <property type="entry name" value="CDK5 REGULATORY SUBUNIT-ASSOCIATED PROTEIN 1"/>
    <property type="match status" value="1"/>
</dbReference>
<dbReference type="PANTHER" id="PTHR43020:SF2">
    <property type="entry name" value="MITOCHONDRIAL TRNA METHYLTHIOTRANSFERASE CDK5RAP1"/>
    <property type="match status" value="1"/>
</dbReference>
<dbReference type="Pfam" id="PF04055">
    <property type="entry name" value="Radical_SAM"/>
    <property type="match status" value="1"/>
</dbReference>
<dbReference type="Pfam" id="PF01938">
    <property type="entry name" value="TRAM"/>
    <property type="match status" value="1"/>
</dbReference>
<dbReference type="Pfam" id="PF00919">
    <property type="entry name" value="UPF0004"/>
    <property type="match status" value="1"/>
</dbReference>
<dbReference type="SFLD" id="SFLDF00273">
    <property type="entry name" value="(dimethylallyl)adenosine_tRNA"/>
    <property type="match status" value="1"/>
</dbReference>
<dbReference type="SFLD" id="SFLDG01082">
    <property type="entry name" value="B12-binding_domain_containing"/>
    <property type="match status" value="1"/>
</dbReference>
<dbReference type="SFLD" id="SFLDG01061">
    <property type="entry name" value="methylthiotransferase"/>
    <property type="match status" value="1"/>
</dbReference>
<dbReference type="SMART" id="SM00729">
    <property type="entry name" value="Elp3"/>
    <property type="match status" value="1"/>
</dbReference>
<dbReference type="SUPFAM" id="SSF102114">
    <property type="entry name" value="Radical SAM enzymes"/>
    <property type="match status" value="1"/>
</dbReference>
<dbReference type="PROSITE" id="PS51449">
    <property type="entry name" value="MTTASE_N"/>
    <property type="match status" value="1"/>
</dbReference>
<dbReference type="PROSITE" id="PS01278">
    <property type="entry name" value="MTTASE_RADICAL"/>
    <property type="match status" value="1"/>
</dbReference>
<dbReference type="PROSITE" id="PS51918">
    <property type="entry name" value="RADICAL_SAM"/>
    <property type="match status" value="1"/>
</dbReference>
<dbReference type="PROSITE" id="PS50926">
    <property type="entry name" value="TRAM"/>
    <property type="match status" value="1"/>
</dbReference>
<feature type="chain" id="PRO_0000374514" description="tRNA-2-methylthio-N(6)-dimethylallyladenosine synthase">
    <location>
        <begin position="1"/>
        <end position="454"/>
    </location>
</feature>
<feature type="domain" description="MTTase N-terminal" evidence="1">
    <location>
        <begin position="11"/>
        <end position="128"/>
    </location>
</feature>
<feature type="domain" description="Radical SAM core" evidence="2">
    <location>
        <begin position="151"/>
        <end position="382"/>
    </location>
</feature>
<feature type="domain" description="TRAM" evidence="1">
    <location>
        <begin position="385"/>
        <end position="449"/>
    </location>
</feature>
<feature type="binding site" evidence="1">
    <location>
        <position position="20"/>
    </location>
    <ligand>
        <name>[4Fe-4S] cluster</name>
        <dbReference type="ChEBI" id="CHEBI:49883"/>
        <label>1</label>
    </ligand>
</feature>
<feature type="binding site" evidence="1">
    <location>
        <position position="57"/>
    </location>
    <ligand>
        <name>[4Fe-4S] cluster</name>
        <dbReference type="ChEBI" id="CHEBI:49883"/>
        <label>1</label>
    </ligand>
</feature>
<feature type="binding site" evidence="1">
    <location>
        <position position="91"/>
    </location>
    <ligand>
        <name>[4Fe-4S] cluster</name>
        <dbReference type="ChEBI" id="CHEBI:49883"/>
        <label>1</label>
    </ligand>
</feature>
<feature type="binding site" evidence="1">
    <location>
        <position position="165"/>
    </location>
    <ligand>
        <name>[4Fe-4S] cluster</name>
        <dbReference type="ChEBI" id="CHEBI:49883"/>
        <label>2</label>
        <note>4Fe-4S-S-AdoMet</note>
    </ligand>
</feature>
<feature type="binding site" evidence="1">
    <location>
        <position position="169"/>
    </location>
    <ligand>
        <name>[4Fe-4S] cluster</name>
        <dbReference type="ChEBI" id="CHEBI:49883"/>
        <label>2</label>
        <note>4Fe-4S-S-AdoMet</note>
    </ligand>
</feature>
<feature type="binding site" evidence="1">
    <location>
        <position position="172"/>
    </location>
    <ligand>
        <name>[4Fe-4S] cluster</name>
        <dbReference type="ChEBI" id="CHEBI:49883"/>
        <label>2</label>
        <note>4Fe-4S-S-AdoMet</note>
    </ligand>
</feature>
<reference key="1">
    <citation type="journal article" date="2008" name="PLoS Genet.">
        <title>Complete genome sequence of the complex carbohydrate-degrading marine bacterium, Saccharophagus degradans strain 2-40 T.</title>
        <authorList>
            <person name="Weiner R.M."/>
            <person name="Taylor L.E. II"/>
            <person name="Henrissat B."/>
            <person name="Hauser L."/>
            <person name="Land M."/>
            <person name="Coutinho P.M."/>
            <person name="Rancurel C."/>
            <person name="Saunders E.H."/>
            <person name="Longmire A.G."/>
            <person name="Zhang H."/>
            <person name="Bayer E.A."/>
            <person name="Gilbert H.J."/>
            <person name="Larimer F."/>
            <person name="Zhulin I.B."/>
            <person name="Ekborg N.A."/>
            <person name="Lamed R."/>
            <person name="Richardson P.M."/>
            <person name="Borovok I."/>
            <person name="Hutcheson S."/>
        </authorList>
    </citation>
    <scope>NUCLEOTIDE SEQUENCE [LARGE SCALE GENOMIC DNA]</scope>
    <source>
        <strain>2-40 / ATCC 43961 / DSM 17024</strain>
    </source>
</reference>
<keyword id="KW-0004">4Fe-4S</keyword>
<keyword id="KW-0963">Cytoplasm</keyword>
<keyword id="KW-0408">Iron</keyword>
<keyword id="KW-0411">Iron-sulfur</keyword>
<keyword id="KW-0479">Metal-binding</keyword>
<keyword id="KW-1185">Reference proteome</keyword>
<keyword id="KW-0949">S-adenosyl-L-methionine</keyword>
<keyword id="KW-0808">Transferase</keyword>
<keyword id="KW-0819">tRNA processing</keyword>
<evidence type="ECO:0000255" key="1">
    <source>
        <dbReference type="HAMAP-Rule" id="MF_01864"/>
    </source>
</evidence>
<evidence type="ECO:0000255" key="2">
    <source>
        <dbReference type="PROSITE-ProRule" id="PRU01266"/>
    </source>
</evidence>
<accession>Q21FH4</accession>
<name>MIAB_SACD2</name>
<gene>
    <name evidence="1" type="primary">miaB</name>
    <name type="ordered locus">Sde_3300</name>
</gene>
<sequence>MSESTTAKPTKKLYIQTHGCQMNEYDSSRMRDLLGASHDMVPTDNPEEADVLLVNTCSIREKAQEKLFHQLGRWKHLKEAKPDLVIGVGGCVASQEGDAISKRAPFVDLIFGPQTLHRLPEMIETPRENGAVVVDISFPEIEKFDNLPEPEADGATAFVSVMEGCSKYCTFCVVPYTRGEEVSRPAVDVLREVTHLASQGVREVNLLGQNVNAYRDDSSGEVIDLAELIAAVADIDGIDRIRFTTSHPMEFTESLIQAYAEIPELVSHLHLPVQSGSDRILSAMKRGHTCLEYKSKLRKIRALRPDISFSSDFIIGFPGETEADFAATMKLIEDIGFDNSFSFIYSPRPGTPAADLPDDTPEQVKKDRLKILQTRIIQQAQEISRRMVGNTERVLVTGYSKKDPGQLSGRTENNRVVNFRCNQPELIGKFADILIEEALPNSLRGVLLGSELDD</sequence>
<protein>
    <recommendedName>
        <fullName evidence="1">tRNA-2-methylthio-N(6)-dimethylallyladenosine synthase</fullName>
        <ecNumber evidence="1">2.8.4.3</ecNumber>
    </recommendedName>
    <alternativeName>
        <fullName evidence="1">(Dimethylallyl)adenosine tRNA methylthiotransferase MiaB</fullName>
    </alternativeName>
    <alternativeName>
        <fullName evidence="1">tRNA-i(6)A37 methylthiotransferase</fullName>
    </alternativeName>
</protein>
<comment type="function">
    <text evidence="1">Catalyzes the methylthiolation of N6-(dimethylallyl)adenosine (i(6)A), leading to the formation of 2-methylthio-N6-(dimethylallyl)adenosine (ms(2)i(6)A) at position 37 in tRNAs that read codons beginning with uridine.</text>
</comment>
<comment type="catalytic activity">
    <reaction evidence="1">
        <text>N(6)-dimethylallyladenosine(37) in tRNA + (sulfur carrier)-SH + AH2 + 2 S-adenosyl-L-methionine = 2-methylsulfanyl-N(6)-dimethylallyladenosine(37) in tRNA + (sulfur carrier)-H + 5'-deoxyadenosine + L-methionine + A + S-adenosyl-L-homocysteine + 2 H(+)</text>
        <dbReference type="Rhea" id="RHEA:37067"/>
        <dbReference type="Rhea" id="RHEA-COMP:10375"/>
        <dbReference type="Rhea" id="RHEA-COMP:10376"/>
        <dbReference type="Rhea" id="RHEA-COMP:14737"/>
        <dbReference type="Rhea" id="RHEA-COMP:14739"/>
        <dbReference type="ChEBI" id="CHEBI:13193"/>
        <dbReference type="ChEBI" id="CHEBI:15378"/>
        <dbReference type="ChEBI" id="CHEBI:17319"/>
        <dbReference type="ChEBI" id="CHEBI:17499"/>
        <dbReference type="ChEBI" id="CHEBI:29917"/>
        <dbReference type="ChEBI" id="CHEBI:57844"/>
        <dbReference type="ChEBI" id="CHEBI:57856"/>
        <dbReference type="ChEBI" id="CHEBI:59789"/>
        <dbReference type="ChEBI" id="CHEBI:64428"/>
        <dbReference type="ChEBI" id="CHEBI:74415"/>
        <dbReference type="ChEBI" id="CHEBI:74417"/>
        <dbReference type="EC" id="2.8.4.3"/>
    </reaction>
</comment>
<comment type="cofactor">
    <cofactor evidence="1">
        <name>[4Fe-4S] cluster</name>
        <dbReference type="ChEBI" id="CHEBI:49883"/>
    </cofactor>
    <text evidence="1">Binds 2 [4Fe-4S] clusters. One cluster is coordinated with 3 cysteines and an exchangeable S-adenosyl-L-methionine.</text>
</comment>
<comment type="subunit">
    <text evidence="1">Monomer.</text>
</comment>
<comment type="subcellular location">
    <subcellularLocation>
        <location evidence="1">Cytoplasm</location>
    </subcellularLocation>
</comment>
<comment type="similarity">
    <text evidence="1">Belongs to the methylthiotransferase family. MiaB subfamily.</text>
</comment>
<organism>
    <name type="scientific">Saccharophagus degradans (strain 2-40 / ATCC 43961 / DSM 17024)</name>
    <dbReference type="NCBI Taxonomy" id="203122"/>
    <lineage>
        <taxon>Bacteria</taxon>
        <taxon>Pseudomonadati</taxon>
        <taxon>Pseudomonadota</taxon>
        <taxon>Gammaproteobacteria</taxon>
        <taxon>Cellvibrionales</taxon>
        <taxon>Cellvibrionaceae</taxon>
        <taxon>Saccharophagus</taxon>
    </lineage>
</organism>
<proteinExistence type="inferred from homology"/>